<evidence type="ECO:0000305" key="1"/>
<comment type="similarity">
    <text evidence="1">Belongs to the UPF0744 family.</text>
</comment>
<feature type="chain" id="PRO_0000202889" description="UPF0744 protein YSD83">
    <location>
        <begin position="1"/>
        <end position="385"/>
    </location>
</feature>
<gene>
    <name type="primary">YSD83</name>
</gene>
<dbReference type="EMBL" id="X73886">
    <property type="protein sequence ID" value="CAA52092.1"/>
    <property type="molecule type" value="Genomic_DNA"/>
</dbReference>
<dbReference type="SMR" id="P41907"/>
<dbReference type="VEuPathDB" id="FungiDB:SPAR_H00590"/>
<dbReference type="InterPro" id="IPR013952">
    <property type="entry name" value="DUF1776_fun"/>
</dbReference>
<dbReference type="Pfam" id="PF08643">
    <property type="entry name" value="DUF1776"/>
    <property type="match status" value="1"/>
</dbReference>
<proteinExistence type="inferred from homology"/>
<accession>P41907</accession>
<name>YHH7_SACPA</name>
<protein>
    <recommendedName>
        <fullName>UPF0744 protein YSD83</fullName>
    </recommendedName>
</protein>
<organism>
    <name type="scientific">Saccharomyces paradoxus</name>
    <name type="common">Yeast</name>
    <name type="synonym">Saccharomyces douglasii</name>
    <dbReference type="NCBI Taxonomy" id="27291"/>
    <lineage>
        <taxon>Eukaryota</taxon>
        <taxon>Fungi</taxon>
        <taxon>Dikarya</taxon>
        <taxon>Ascomycota</taxon>
        <taxon>Saccharomycotina</taxon>
        <taxon>Saccharomycetes</taxon>
        <taxon>Saccharomycetales</taxon>
        <taxon>Saccharomycetaceae</taxon>
        <taxon>Saccharomyces</taxon>
    </lineage>
</organism>
<reference key="1">
    <citation type="journal article" date="1994" name="Yeast">
        <title>Sequence comparison of the ARG4 chromosomal regions from the two related yeasts, Saccharomyces cerevisiae and Saccharomyces douglasii.</title>
        <authorList>
            <person name="Adjiri A."/>
            <person name="Chanet R."/>
            <person name="Mezard C."/>
            <person name="Fabre F."/>
        </authorList>
    </citation>
    <scope>NUCLEOTIDE SEQUENCE [GENOMIC DNA]</scope>
</reference>
<sequence>MTWPGGKDIVDQIFDAGYWLVSKSAVLGDEIKNHVEKSIESISEKMSNKETPRLQESNSNKFKAYKTLRIGFQDHWKLGLGISATSLCLYLGYRTFFKLPPYLPEAESQVVLILGDMNDPIIRNQVMDLYRRRFTVYICTENADVYKKHEEDQDFVYYIDPTCEEDFEAFFLDVPRLASILFMPRLSYHPSGAISCDSLESEIHSSILVYHQALLTIIPHLKRNTQLIMFNPSLTAELNLVHHSTEIIMSSIIDSLFRIFKNYRRLNVSMIKLGILQIGSQPSNYKFLTMAGSDIHEALHYPVYKMIMSANGYKLRQLLSWLTTWGGCNSVYHCGRFSYLISWPFASLIYNHRTRFSLKRLKKNLTKAYNSIISILPQSSSKSSK</sequence>